<accession>O75298</accession>
<accession>O60509</accession>
<accession>Q7RTM6</accession>
<accession>Q7RTN1</accession>
<accession>Q7RTN2</accession>
<keyword id="KW-0024">Alternative initiation</keyword>
<keyword id="KW-0025">Alternative splicing</keyword>
<keyword id="KW-1003">Cell membrane</keyword>
<keyword id="KW-0963">Cytoplasm</keyword>
<keyword id="KW-0206">Cytoskeleton</keyword>
<keyword id="KW-0225">Disease variant</keyword>
<keyword id="KW-0256">Endoplasmic reticulum</keyword>
<keyword id="KW-0890">Hereditary spastic paraplegia</keyword>
<keyword id="KW-0472">Membrane</keyword>
<keyword id="KW-0523">Neurodegeneration</keyword>
<keyword id="KW-0622">Neuropathy</keyword>
<keyword id="KW-0597">Phosphoprotein</keyword>
<keyword id="KW-1267">Proteomics identification</keyword>
<keyword id="KW-1185">Reference proteome</keyword>
<keyword id="KW-0703">Sarcoplasmic reticulum</keyword>
<keyword id="KW-0812">Transmembrane</keyword>
<keyword id="KW-1133">Transmembrane helix</keyword>
<feature type="chain" id="PRO_0000030351" description="Reticulon-2">
    <location>
        <begin position="1"/>
        <end position="545"/>
    </location>
</feature>
<feature type="transmembrane region" description="Helical" evidence="3">
    <location>
        <begin position="368"/>
        <end position="388"/>
    </location>
</feature>
<feature type="transmembrane region" description="Helical" evidence="3">
    <location>
        <begin position="463"/>
        <end position="483"/>
    </location>
</feature>
<feature type="domain" description="Reticulon" evidence="4">
    <location>
        <begin position="345"/>
        <end position="545"/>
    </location>
</feature>
<feature type="region of interest" description="Disordered" evidence="5">
    <location>
        <begin position="1"/>
        <end position="183"/>
    </location>
</feature>
<feature type="region of interest" description="Disordered" evidence="5">
    <location>
        <begin position="199"/>
        <end position="250"/>
    </location>
</feature>
<feature type="compositionally biased region" description="Low complexity" evidence="5">
    <location>
        <begin position="14"/>
        <end position="25"/>
    </location>
</feature>
<feature type="compositionally biased region" description="Basic and acidic residues" evidence="5">
    <location>
        <begin position="32"/>
        <end position="43"/>
    </location>
</feature>
<feature type="compositionally biased region" description="Basic and acidic residues" evidence="5">
    <location>
        <begin position="135"/>
        <end position="146"/>
    </location>
</feature>
<feature type="compositionally biased region" description="Low complexity" evidence="5">
    <location>
        <begin position="157"/>
        <end position="166"/>
    </location>
</feature>
<feature type="compositionally biased region" description="Polar residues" evidence="5">
    <location>
        <begin position="199"/>
        <end position="230"/>
    </location>
</feature>
<feature type="modified residue" description="Phosphoserine" evidence="1">
    <location>
        <position position="44"/>
    </location>
</feature>
<feature type="modified residue" description="Phosphoserine" evidence="1">
    <location>
        <position position="227"/>
    </location>
</feature>
<feature type="modified residue" description="Phosphoserine" evidence="1">
    <location>
        <position position="229"/>
    </location>
</feature>
<feature type="splice variant" id="VSP_018870" description="In isoform RTN2-C." evidence="13">
    <location>
        <begin position="1"/>
        <end position="340"/>
    </location>
</feature>
<feature type="splice variant" id="VSP_005649" description="In isoform RTN2-B." evidence="12">
    <location>
        <begin position="272"/>
        <end position="344"/>
    </location>
</feature>
<feature type="sequence variant" id="VAR_089921" description="In HMNR11; likely pathogenic." evidence="10">
    <location>
        <begin position="27"/>
        <end position="545"/>
    </location>
</feature>
<feature type="sequence variant" id="VAR_089922" description="In SPG12; likely pathogenic." evidence="9">
    <location>
        <begin position="35"/>
        <end position="545"/>
    </location>
</feature>
<feature type="sequence variant" id="VAR_089923" description="In SPG12; uncertain significance." evidence="9">
    <original>G</original>
    <variation>D</variation>
    <location>
        <position position="77"/>
    </location>
</feature>
<feature type="sequence variant" id="VAR_089924" description="In SPG12; uncertain significance; dbSNP:rs757996406." evidence="9">
    <original>P</original>
    <variation>T</variation>
    <location>
        <position position="113"/>
    </location>
</feature>
<feature type="sequence variant" id="VAR_089925" description="In HMNR11; likely pathogenic." evidence="10">
    <location>
        <begin position="191"/>
        <end position="545"/>
    </location>
</feature>
<feature type="sequence variant" id="VAR_089926" description="In HMNR11; likely pathogenic." evidence="10">
    <location>
        <begin position="193"/>
        <end position="545"/>
    </location>
</feature>
<feature type="sequence variant" id="VAR_067562" description="In SPG12; uncertain significance; dbSNP:rs140494585." evidence="7">
    <original>S</original>
    <variation>F</variation>
    <location>
        <position position="367"/>
    </location>
</feature>
<feature type="sequence variant" id="VAR_053632" description="In dbSNP:rs35461805.">
    <original>R</original>
    <variation>Q</variation>
    <location>
        <position position="425"/>
    </location>
</feature>
<sequence length="545" mass="59264">MGQVLPVFAHCKEAPSTASSTPDSTEGGNDDSDFRELHTAREFSEEDEEETTSQDWGTPRELTFSYIAFDGVVGSGGRRDSTARRPRPQGRSVSEPRDQHPQPSLGDSLESIPSLSQSPEPGRRGDPDTAPPSERPLEDLRLRLDHLGWVARGTGSGEDSSTSSSTPLEDEEPQEPNRLETGEAGEELDLRLRLAQPSSPEVLTPQLSPGSGTPQAGTPSPSRSRDSNSGPEEPLLEEEEKQWGPLEREPVRGQCLDSTDQLEFTVEPRLLGTAMEWLKTSLLLAVYKTVPILELSPPLWTAIGWVQRGPTPPTPVLRVLLKWAKSPRSSGVPSLSLGADMGSKVADLLYWKDTRTSGVVFTGLMVSLLCLLHFSIVSVAAHLALLLLCGTISLRVYRKVLQAVHRGDGANPFQAYLDVDLTLTREQTERLSHQITSRVVSAATQLRHFFLVEDLVDSLKLALLFYILTFVGAIFNGLTLLILGVIGLFTIPLLYRQHQAQIDQYVGLVTNQLSHIKAKIRAKIPGTGALASAAAAVSGSKAKAE</sequence>
<protein>
    <recommendedName>
        <fullName>Reticulon-2</fullName>
    </recommendedName>
    <alternativeName>
        <fullName>Neuroendocrine-specific protein-like 1</fullName>
        <shortName>NSP-like protein 1</shortName>
    </alternativeName>
    <alternativeName>
        <fullName>Neuroendocrine-specific protein-like I</fullName>
        <shortName>NSP-like protein I</shortName>
        <shortName>NSPLI</shortName>
    </alternativeName>
</protein>
<evidence type="ECO:0000250" key="1">
    <source>
        <dbReference type="UniProtKB" id="O70622"/>
    </source>
</evidence>
<evidence type="ECO:0000250" key="2">
    <source>
        <dbReference type="UniProtKB" id="Q6WN19"/>
    </source>
</evidence>
<evidence type="ECO:0000255" key="3"/>
<evidence type="ECO:0000255" key="4">
    <source>
        <dbReference type="PROSITE-ProRule" id="PRU00170"/>
    </source>
</evidence>
<evidence type="ECO:0000256" key="5">
    <source>
        <dbReference type="SAM" id="MobiDB-lite"/>
    </source>
</evidence>
<evidence type="ECO:0000269" key="6">
    <source>
    </source>
</evidence>
<evidence type="ECO:0000269" key="7">
    <source>
    </source>
</evidence>
<evidence type="ECO:0000269" key="8">
    <source>
    </source>
</evidence>
<evidence type="ECO:0000269" key="9">
    <source>
    </source>
</evidence>
<evidence type="ECO:0000269" key="10">
    <source>
    </source>
</evidence>
<evidence type="ECO:0000269" key="11">
    <source>
    </source>
</evidence>
<evidence type="ECO:0000303" key="12">
    <source>
    </source>
</evidence>
<evidence type="ECO:0000305" key="13"/>
<proteinExistence type="evidence at protein level"/>
<name>RTN2_HUMAN</name>
<gene>
    <name type="primary">RTN2</name>
    <name type="synonym">NSPL1</name>
</gene>
<organism>
    <name type="scientific">Homo sapiens</name>
    <name type="common">Human</name>
    <dbReference type="NCBI Taxonomy" id="9606"/>
    <lineage>
        <taxon>Eukaryota</taxon>
        <taxon>Metazoa</taxon>
        <taxon>Chordata</taxon>
        <taxon>Craniata</taxon>
        <taxon>Vertebrata</taxon>
        <taxon>Euteleostomi</taxon>
        <taxon>Mammalia</taxon>
        <taxon>Eutheria</taxon>
        <taxon>Euarchontoglires</taxon>
        <taxon>Primates</taxon>
        <taxon>Haplorrhini</taxon>
        <taxon>Catarrhini</taxon>
        <taxon>Hominidae</taxon>
        <taxon>Homo</taxon>
    </lineage>
</organism>
<reference key="1">
    <citation type="journal article" date="1998" name="Genomics">
        <title>cDNA cloning, genomic organization, and expression of the human RTN2 gene, a member of a gene family encoding reticulons.</title>
        <authorList>
            <person name="Roebroek A.J.M."/>
            <person name="Contreras B."/>
            <person name="Pauli I.G.L."/>
            <person name="Van de Ven W.J.M."/>
        </authorList>
    </citation>
    <scope>NUCLEOTIDE SEQUENCE [MRNA]</scope>
    <scope>ALTERNATIVE SPLICING</scope>
    <scope>TISSUE SPECIFICITY</scope>
    <source>
        <tissue>Lung carcinoma</tissue>
    </source>
</reference>
<reference key="2">
    <citation type="journal article" date="1998" name="Mamm. Genome">
        <title>Molecular cloning of a novel mouse gene with predominant muscle and neural expression.</title>
        <authorList>
            <person name="Geisler J.G."/>
            <person name="Stubbs L.J."/>
            <person name="Wasserman W.W."/>
            <person name="Mucenski M.L."/>
        </authorList>
    </citation>
    <scope>NUCLEOTIDE SEQUENCE [MRNA] OF 108-545 (ISOFORM RTN2-B)</scope>
    <source>
        <tissue>Brain</tissue>
    </source>
</reference>
<reference key="3">
    <citation type="journal article" date="2003" name="FASEB J.">
        <title>A reticular rhapsody: phylogenic evolution and nomenclature of the RTN/Nogo gene family.</title>
        <authorList>
            <person name="Oertle T."/>
            <person name="Klinger M."/>
            <person name="Stuermer C.A.O."/>
            <person name="Schwab M.E."/>
        </authorList>
    </citation>
    <scope>REVIEW</scope>
</reference>
<reference key="4">
    <citation type="journal article" date="2004" name="Nat. Med.">
        <title>Reticulon family members modulate BACE1 activity and amyloid-beta peptide generation.</title>
        <authorList>
            <person name="He W."/>
            <person name="Lu Y."/>
            <person name="Qahwash I."/>
            <person name="Hu X.-Y."/>
            <person name="Chang A."/>
            <person name="Yan R."/>
        </authorList>
    </citation>
    <scope>FUNCTION</scope>
    <scope>INTERACTION WITH BACE1</scope>
</reference>
<reference key="5">
    <citation type="journal article" date="2011" name="BMC Syst. Biol.">
        <title>Initial characterization of the human central proteome.</title>
        <authorList>
            <person name="Burkard T.R."/>
            <person name="Planyavsky M."/>
            <person name="Kaupe I."/>
            <person name="Breitwieser F.P."/>
            <person name="Buerckstuemmer T."/>
            <person name="Bennett K.L."/>
            <person name="Superti-Furga G."/>
            <person name="Colinge J."/>
        </authorList>
    </citation>
    <scope>IDENTIFICATION BY MASS SPECTROMETRY [LARGE SCALE ANALYSIS]</scope>
</reference>
<reference key="6">
    <citation type="journal article" date="2012" name="J. Clin. Invest.">
        <title>Mutations in the ER-shaping protein reticulon 2 cause the axon-degenerative disorder hereditary spastic paraplegia type 12.</title>
        <authorList>
            <person name="Montenegro G."/>
            <person name="Rebelo A.P."/>
            <person name="Connell J."/>
            <person name="Allison R."/>
            <person name="Babalini C."/>
            <person name="D'Aloia M."/>
            <person name="Montieri P."/>
            <person name="Schule R."/>
            <person name="Ishiura H."/>
            <person name="Price J."/>
            <person name="Strickland A."/>
            <person name="Gonzalez M.A."/>
            <person name="Baumbach-Reardon L."/>
            <person name="Deconinck T."/>
            <person name="Huang J."/>
            <person name="Bernardi G."/>
            <person name="Vance J.M."/>
            <person name="Rogers M.T."/>
            <person name="Tsuji S."/>
            <person name="De Jonghe P."/>
            <person name="Pericak-Vance M.A."/>
            <person name="Schols L."/>
            <person name="Orlacchio A."/>
            <person name="Reid E."/>
            <person name="Zuchner S."/>
        </authorList>
    </citation>
    <scope>SUBCELLULAR LOCATION</scope>
    <scope>INTERACTION WITH SPAST</scope>
    <scope>VARIANT SPG12 PHE-367</scope>
    <scope>INVOLVEMENT IN SPG12</scope>
</reference>
<reference key="7">
    <citation type="journal article" date="2014" name="Kobe J. Med. Sci.">
        <title>Identification and characterization of TMEM33 as a reticulon-binding protein.</title>
        <authorList>
            <person name="Urade T."/>
            <person name="Yamamoto Y."/>
            <person name="Zhang X."/>
            <person name="Ku Y."/>
            <person name="Sakisaka T."/>
        </authorList>
    </citation>
    <scope>INTERACTION WITH TMEM33</scope>
</reference>
<reference key="8">
    <citation type="journal article" date="2022" name="Ann. Clin. Transl. Neurol.">
        <title>New phenotype of RTN2-related spectrum: Complicated form of spastic paraplegia-12.</title>
        <authorList>
            <person name="Tian W."/>
            <person name="Zheng H."/>
            <person name="Zhu Z."/>
            <person name="Zhang C."/>
            <person name="Luan X."/>
            <person name="Cao L."/>
        </authorList>
    </citation>
    <scope>VARIANTS SPG12 35-ARG--GLU-545 DEL; ASP-77 AND THR-113</scope>
    <scope>INVOLVEMENT IN SPG12</scope>
</reference>
<reference key="9">
    <citation type="journal article" date="2024" name="Brain">
        <title>RTN2 deficiency results in an autosomal recessive distal motor neuropathy with lower limb spasticity.</title>
        <authorList>
            <person name="Maroofian R."/>
            <person name="Sarraf P."/>
            <person name="O'Brien T.J."/>
            <person name="Kamel M."/>
            <person name="Cakar A."/>
            <person name="Elkhateeb N."/>
            <person name="Lau T."/>
            <person name="Patil S.J."/>
            <person name="Record C.J."/>
            <person name="Horga A."/>
            <person name="Essid M."/>
            <person name="Selim L."/>
            <person name="Benrhouma H."/>
            <person name="Ben Younes T."/>
            <person name="Zifarelli G."/>
            <person name="Pagnamenta A.T."/>
            <person name="Bauer P."/>
            <person name="Khundadze M."/>
            <person name="Mirecki A."/>
            <person name="Kamel S.M."/>
            <person name="Elmonem M.A."/>
            <person name="Ghayoor Karimiani E."/>
            <person name="Jamshidi Y."/>
            <person name="Offiah A.C."/>
            <person name="Rossor A.M."/>
            <person name="Youssef-Turki I.B."/>
            <person name="Huebner C.A."/>
            <person name="Munot P."/>
            <person name="Reilly M.M."/>
            <person name="Brown A.E.X."/>
            <person name="Nagy S."/>
            <person name="Houlden H."/>
        </authorList>
    </citation>
    <scope>VARIANTS HMNR11 27-GLY--GLU-545 DEL; 191-ARG--GLU-545 DEL AND 193-ARG--GLU-545 DEL</scope>
    <scope>INVOLVEMENT IN HMNR11</scope>
</reference>
<comment type="function">
    <text evidence="1 2 6">Inhibits amyloid precursor protein processing, probably by blocking BACE1 activity (PubMed:15286784). Enhances trafficking of the glutamate transporter SLC1A1/EAAC1 from the endoplasmic reticulum to the cell surface (By similarity). Plays a role in the translocation of SLC2A4/GLUT4 from intracellular membranes to the cell membrane which facilitates the uptake of glucose into the cell (By similarity).</text>
</comment>
<comment type="subunit">
    <text evidence="2 6 7">Interacts with isoform 1 but not isoform 3 of SPAST (PubMed:22232211). Interacts with BACE1 (PubMed:15286784). Interacts (via first transmembrane domain) with ARL6IP5/GTRAP3-18 (By similarity). Interacts (via N-terminus) with SLC1A1/EAAC1; the interaction promotes cell surface expression of SLC1A1 (By similarity).</text>
</comment>
<comment type="subunit">
    <molecule>Isoform RTN2-B</molecule>
    <text evidence="8">Interacts with TMEM33.</text>
</comment>
<comment type="interaction">
    <interactant intactId="EBI-2797962">
        <id>O75298</id>
    </interactant>
    <interactant intactId="EBI-715945">
        <id>Q9NQC3</id>
        <label>RTN4</label>
    </interactant>
    <organismsDiffer>false</organismsDiffer>
    <experiments>3</experiments>
</comment>
<comment type="subcellular location">
    <subcellularLocation>
        <location evidence="7">Endoplasmic reticulum membrane</location>
        <topology evidence="3">Multi-pass membrane protein</topology>
    </subcellularLocation>
    <subcellularLocation>
        <location evidence="1">Sarcoplasmic reticulum membrane</location>
        <topology evidence="3">Multi-pass membrane protein</topology>
    </subcellularLocation>
    <subcellularLocation>
        <location evidence="2">Cell membrane</location>
        <topology evidence="3">Multi-pass membrane protein</topology>
    </subcellularLocation>
    <subcellularLocation>
        <location evidence="1">Cell membrane</location>
        <location evidence="1">Sarcolemma</location>
        <topology evidence="3">Multi-pass membrane protein</topology>
    </subcellularLocation>
    <subcellularLocation>
        <location evidence="1">Cell membrane</location>
        <location evidence="1">Sarcolemma</location>
        <location evidence="1">T-tubule</location>
        <topology evidence="3">Multi-pass membrane protein</topology>
    </subcellularLocation>
    <subcellularLocation>
        <location evidence="1">Cytoplasm</location>
        <location evidence="1">Myofibril</location>
        <location evidence="1">Sarcomere</location>
        <location evidence="1">Z line</location>
    </subcellularLocation>
    <subcellularLocation>
        <location evidence="1">Cytoplasm</location>
        <location evidence="1">Cytoskeleton</location>
    </subcellularLocation>
    <text evidence="1">Localizes to intermediate filaments in mononucleated myoblasts and to Z lines in mature myotubes.</text>
</comment>
<comment type="alternative products">
    <event type="alternative splicing"/>
    <event type="alternative initiation"/>
    <isoform>
        <id>O75298-1</id>
        <name>RTN2-A</name>
        <sequence type="displayed"/>
    </isoform>
    <isoform>
        <id>O75298-2</id>
        <name>RTN2-B</name>
        <sequence type="described" ref="VSP_005649"/>
    </isoform>
    <isoform>
        <id>O75298-3</id>
        <name>RTN2-C</name>
        <sequence type="described" ref="VSP_018870"/>
    </isoform>
</comment>
<comment type="tissue specificity">
    <molecule>Isoform RTN2-C</molecule>
    <text evidence="11">Highly expressed in skeletal muscle.</text>
</comment>
<comment type="disease" evidence="7 9">
    <disease id="DI-03410">
        <name>Spastic paraplegia 12, autosomal dominant</name>
        <acronym>SPG12</acronym>
        <description>A form of spastic paraplegia, a neurodegenerative disorder characterized by a slow, gradual, progressive weakness and spasticity of the lower limbs. Rate of progression and the severity of symptoms are quite variable. Initial symptoms may include difficulty with balance, weakness and stiffness in the legs, muscle spasms, and dragging the toes when walking. In some forms of the disorder, bladder symptoms (such as incontinence) may appear, or the weakness and stiffness may spread to other parts of the body.</description>
        <dbReference type="MIM" id="604805"/>
    </disease>
    <text>The disease is caused by variants affecting the gene represented in this entry.</text>
</comment>
<comment type="disease" evidence="10">
    <disease id="DI-06919">
        <name>Neuronopathy, distal hereditary motor, autosomal recessive 11, with spasticity</name>
        <acronym>HMNR11</acronym>
        <description>A form of distal hereditary motor neuronopathy, a heterogeneous group of neuromuscular diseases caused by selective degeneration of motor neurons in the anterior horn of the spinal cord, without sensory deficit in the posterior horn. HMNR11 is an autosomal recessive form characterized by slowly progressive muscle weakness in the distal upper and lower limbs, lower limb spasticity and hyperreflexia, with onset in the first decade of life. Affected individuals have difficulty walking, although ambulation is retained into adulthood. Nerve conduction studies reveal axonal motor neuropathy with neurogenic changes in the electromyography.</description>
        <dbReference type="MIM" id="620854"/>
    </disease>
    <text>The disease is caused by variants affecting the gene represented in this entry.</text>
</comment>
<comment type="miscellaneous">
    <molecule>Isoform RTN2-C</molecule>
    <text evidence="13">Produced by alternative initiation at Met-341 of isoform RTN2-A.</text>
</comment>
<dbReference type="EMBL" id="AF004222">
    <property type="protein sequence ID" value="AAC32542.1"/>
    <property type="molecule type" value="mRNA"/>
</dbReference>
<dbReference type="EMBL" id="AF004223">
    <property type="protein sequence ID" value="AAC32543.1"/>
    <property type="molecule type" value="mRNA"/>
</dbReference>
<dbReference type="EMBL" id="AF004224">
    <property type="protein sequence ID" value="AAC32544.1"/>
    <property type="molecule type" value="mRNA"/>
</dbReference>
<dbReference type="EMBL" id="AF038540">
    <property type="protein sequence ID" value="AAC14910.1"/>
    <property type="molecule type" value="mRNA"/>
</dbReference>
<dbReference type="EMBL" id="BK001686">
    <property type="protein sequence ID" value="DAA01944.1"/>
    <property type="molecule type" value="mRNA"/>
</dbReference>
<dbReference type="EMBL" id="BK001687">
    <property type="protein sequence ID" value="DAA01932.1"/>
    <property type="molecule type" value="mRNA"/>
</dbReference>
<dbReference type="EMBL" id="BK001688">
    <property type="protein sequence ID" value="DAA01933.1"/>
    <property type="molecule type" value="mRNA"/>
</dbReference>
<dbReference type="CCDS" id="CCDS12665.1">
    <molecule id="O75298-1"/>
</dbReference>
<dbReference type="CCDS" id="CCDS12666.1">
    <molecule id="O75298-2"/>
</dbReference>
<dbReference type="CCDS" id="CCDS46114.1">
    <molecule id="O75298-3"/>
</dbReference>
<dbReference type="RefSeq" id="NP_005610.1">
    <molecule id="O75298-1"/>
    <property type="nucleotide sequence ID" value="NM_005619.5"/>
</dbReference>
<dbReference type="RefSeq" id="NP_996783.1">
    <molecule id="O75298-2"/>
    <property type="nucleotide sequence ID" value="NM_206900.3"/>
</dbReference>
<dbReference type="RefSeq" id="NP_996784.1">
    <molecule id="O75298-3"/>
    <property type="nucleotide sequence ID" value="NM_206901.3"/>
</dbReference>
<dbReference type="BioGRID" id="112166">
    <property type="interactions" value="46"/>
</dbReference>
<dbReference type="CORUM" id="O75298"/>
<dbReference type="FunCoup" id="O75298">
    <property type="interactions" value="377"/>
</dbReference>
<dbReference type="IntAct" id="O75298">
    <property type="interactions" value="44"/>
</dbReference>
<dbReference type="STRING" id="9606.ENSP00000245923"/>
<dbReference type="GlyGen" id="O75298">
    <property type="glycosylation" value="4 sites, 1 O-linked glycan (1 site)"/>
</dbReference>
<dbReference type="iPTMnet" id="O75298"/>
<dbReference type="PhosphoSitePlus" id="O75298"/>
<dbReference type="BioMuta" id="RTN2"/>
<dbReference type="jPOST" id="O75298"/>
<dbReference type="MassIVE" id="O75298"/>
<dbReference type="PaxDb" id="9606-ENSP00000245923"/>
<dbReference type="PeptideAtlas" id="O75298"/>
<dbReference type="ProteomicsDB" id="49880">
    <molecule id="O75298-1"/>
</dbReference>
<dbReference type="ProteomicsDB" id="49881">
    <molecule id="O75298-2"/>
</dbReference>
<dbReference type="ProteomicsDB" id="49882">
    <molecule id="O75298-3"/>
</dbReference>
<dbReference type="Pumba" id="O75298"/>
<dbReference type="Antibodypedia" id="31344">
    <property type="antibodies" value="147 antibodies from 26 providers"/>
</dbReference>
<dbReference type="DNASU" id="6253"/>
<dbReference type="Ensembl" id="ENST00000245923.9">
    <molecule id="O75298-1"/>
    <property type="protein sequence ID" value="ENSP00000245923.3"/>
    <property type="gene ID" value="ENSG00000125744.12"/>
</dbReference>
<dbReference type="Ensembl" id="ENST00000344680.8">
    <molecule id="O75298-2"/>
    <property type="protein sequence ID" value="ENSP00000345127.3"/>
    <property type="gene ID" value="ENSG00000125744.12"/>
</dbReference>
<dbReference type="Ensembl" id="ENST00000430715.6">
    <molecule id="O75298-3"/>
    <property type="protein sequence ID" value="ENSP00000398178.1"/>
    <property type="gene ID" value="ENSG00000125744.12"/>
</dbReference>
<dbReference type="GeneID" id="6253"/>
<dbReference type="KEGG" id="hsa:6253"/>
<dbReference type="MANE-Select" id="ENST00000245923.9">
    <property type="protein sequence ID" value="ENSP00000245923.3"/>
    <property type="RefSeq nucleotide sequence ID" value="NM_005619.5"/>
    <property type="RefSeq protein sequence ID" value="NP_005610.1"/>
</dbReference>
<dbReference type="UCSC" id="uc002pcb.5">
    <molecule id="O75298-1"/>
    <property type="organism name" value="human"/>
</dbReference>
<dbReference type="AGR" id="HGNC:10468"/>
<dbReference type="CTD" id="6253"/>
<dbReference type="DisGeNET" id="6253"/>
<dbReference type="GeneCards" id="RTN2"/>
<dbReference type="HGNC" id="HGNC:10468">
    <property type="gene designation" value="RTN2"/>
</dbReference>
<dbReference type="HPA" id="ENSG00000125744">
    <property type="expression patterns" value="Group enriched (skeletal muscle, tongue)"/>
</dbReference>
<dbReference type="MalaCards" id="RTN2"/>
<dbReference type="MIM" id="603183">
    <property type="type" value="gene"/>
</dbReference>
<dbReference type="MIM" id="604805">
    <property type="type" value="phenotype"/>
</dbReference>
<dbReference type="MIM" id="620854">
    <property type="type" value="phenotype"/>
</dbReference>
<dbReference type="neXtProt" id="NX_O75298"/>
<dbReference type="OpenTargets" id="ENSG00000125744"/>
<dbReference type="Orphanet" id="100993">
    <property type="disease" value="Autosomal dominant spastic paraplegia type 12"/>
</dbReference>
<dbReference type="PharmGKB" id="PA34881"/>
<dbReference type="VEuPathDB" id="HostDB:ENSG00000125744"/>
<dbReference type="eggNOG" id="KOG1792">
    <property type="taxonomic scope" value="Eukaryota"/>
</dbReference>
<dbReference type="GeneTree" id="ENSGT00940000160599"/>
<dbReference type="HOGENOM" id="CLU_048580_2_1_1"/>
<dbReference type="InParanoid" id="O75298"/>
<dbReference type="OMA" id="EESEMCE"/>
<dbReference type="OrthoDB" id="567788at2759"/>
<dbReference type="PAN-GO" id="O75298">
    <property type="GO annotations" value="1 GO annotation based on evolutionary models"/>
</dbReference>
<dbReference type="PhylomeDB" id="O75298"/>
<dbReference type="TreeFam" id="TF105431"/>
<dbReference type="PathwayCommons" id="O75298"/>
<dbReference type="SignaLink" id="O75298"/>
<dbReference type="BioGRID-ORCS" id="6253">
    <property type="hits" value="22 hits in 1159 CRISPR screens"/>
</dbReference>
<dbReference type="ChiTaRS" id="RTN2">
    <property type="organism name" value="human"/>
</dbReference>
<dbReference type="GeneWiki" id="RTN2"/>
<dbReference type="GenomeRNAi" id="6253"/>
<dbReference type="Pharos" id="O75298">
    <property type="development level" value="Tbio"/>
</dbReference>
<dbReference type="PRO" id="PR:O75298"/>
<dbReference type="Proteomes" id="UP000005640">
    <property type="component" value="Chromosome 19"/>
</dbReference>
<dbReference type="RNAct" id="O75298">
    <property type="molecule type" value="protein"/>
</dbReference>
<dbReference type="Bgee" id="ENSG00000125744">
    <property type="expression patterns" value="Expressed in skeletal muscle tissue of rectus abdominis and 184 other cell types or tissues"/>
</dbReference>
<dbReference type="ExpressionAtlas" id="O75298">
    <property type="expression patterns" value="baseline and differential"/>
</dbReference>
<dbReference type="GO" id="GO:0009986">
    <property type="term" value="C:cell surface"/>
    <property type="evidence" value="ECO:0007669"/>
    <property type="project" value="Ensembl"/>
</dbReference>
<dbReference type="GO" id="GO:0005783">
    <property type="term" value="C:endoplasmic reticulum"/>
    <property type="evidence" value="ECO:0000314"/>
    <property type="project" value="UniProtKB"/>
</dbReference>
<dbReference type="GO" id="GO:0005789">
    <property type="term" value="C:endoplasmic reticulum membrane"/>
    <property type="evidence" value="ECO:0000318"/>
    <property type="project" value="GO_Central"/>
</dbReference>
<dbReference type="GO" id="GO:0005882">
    <property type="term" value="C:intermediate filament"/>
    <property type="evidence" value="ECO:0000250"/>
    <property type="project" value="UniProtKB"/>
</dbReference>
<dbReference type="GO" id="GO:0043005">
    <property type="term" value="C:neuron projection"/>
    <property type="evidence" value="ECO:0000318"/>
    <property type="project" value="GO_Central"/>
</dbReference>
<dbReference type="GO" id="GO:0014069">
    <property type="term" value="C:postsynaptic density"/>
    <property type="evidence" value="ECO:0000318"/>
    <property type="project" value="GO_Central"/>
</dbReference>
<dbReference type="GO" id="GO:0033017">
    <property type="term" value="C:sarcoplasmic reticulum membrane"/>
    <property type="evidence" value="ECO:0007669"/>
    <property type="project" value="UniProtKB-SubCell"/>
</dbReference>
<dbReference type="GO" id="GO:0030315">
    <property type="term" value="C:T-tubule"/>
    <property type="evidence" value="ECO:0000250"/>
    <property type="project" value="UniProtKB"/>
</dbReference>
<dbReference type="GO" id="GO:0014802">
    <property type="term" value="C:terminal cisterna"/>
    <property type="evidence" value="ECO:0000250"/>
    <property type="project" value="UniProtKB"/>
</dbReference>
<dbReference type="GO" id="GO:0030018">
    <property type="term" value="C:Z disc"/>
    <property type="evidence" value="ECO:0000250"/>
    <property type="project" value="UniProtKB"/>
</dbReference>
<dbReference type="GO" id="GO:0007420">
    <property type="term" value="P:brain development"/>
    <property type="evidence" value="ECO:0000318"/>
    <property type="project" value="GO_Central"/>
</dbReference>
<dbReference type="GO" id="GO:0071787">
    <property type="term" value="P:endoplasmic reticulum tubular network formation"/>
    <property type="evidence" value="ECO:0000318"/>
    <property type="project" value="GO_Central"/>
</dbReference>
<dbReference type="GO" id="GO:0010467">
    <property type="term" value="P:gene expression"/>
    <property type="evidence" value="ECO:0007669"/>
    <property type="project" value="Ensembl"/>
</dbReference>
<dbReference type="GO" id="GO:0065002">
    <property type="term" value="P:intracellular protein transmembrane transport"/>
    <property type="evidence" value="ECO:0000250"/>
    <property type="project" value="UniProtKB"/>
</dbReference>
<dbReference type="GO" id="GO:1902430">
    <property type="term" value="P:negative regulation of amyloid-beta formation"/>
    <property type="evidence" value="ECO:0000314"/>
    <property type="project" value="UniProtKB"/>
</dbReference>
<dbReference type="GO" id="GO:0030182">
    <property type="term" value="P:neuron differentiation"/>
    <property type="evidence" value="ECO:0000318"/>
    <property type="project" value="GO_Central"/>
</dbReference>
<dbReference type="GO" id="GO:0046324">
    <property type="term" value="P:regulation of D-glucose import"/>
    <property type="evidence" value="ECO:0000250"/>
    <property type="project" value="UniProtKB"/>
</dbReference>
<dbReference type="FunFam" id="1.20.5.2480:FF:000001">
    <property type="entry name" value="Reticulon"/>
    <property type="match status" value="1"/>
</dbReference>
<dbReference type="Gene3D" id="1.20.5.2480">
    <property type="match status" value="1"/>
</dbReference>
<dbReference type="InterPro" id="IPR003388">
    <property type="entry name" value="Reticulon"/>
</dbReference>
<dbReference type="InterPro" id="IPR046964">
    <property type="entry name" value="RTN1-4"/>
</dbReference>
<dbReference type="PANTHER" id="PTHR45799:SF3">
    <property type="entry name" value="RETICULON-2"/>
    <property type="match status" value="1"/>
</dbReference>
<dbReference type="PANTHER" id="PTHR45799">
    <property type="entry name" value="RETICULON-LIKE PROTEIN"/>
    <property type="match status" value="1"/>
</dbReference>
<dbReference type="Pfam" id="PF02453">
    <property type="entry name" value="Reticulon"/>
    <property type="match status" value="1"/>
</dbReference>
<dbReference type="PROSITE" id="PS50845">
    <property type="entry name" value="RETICULON"/>
    <property type="match status" value="1"/>
</dbReference>